<protein>
    <recommendedName>
        <fullName>Nuclear receptor ROR-alpha</fullName>
    </recommendedName>
    <alternativeName>
        <fullName>Nuclear receptor RZR-alpha</fullName>
    </alternativeName>
    <alternativeName>
        <fullName>Nuclear receptor subfamily 1 group F member 1</fullName>
    </alternativeName>
    <alternativeName>
        <fullName>RAR-related orphan receptor A</fullName>
    </alternativeName>
    <alternativeName>
        <fullName>Retinoid-related orphan receptor-alpha</fullName>
    </alternativeName>
</protein>
<evidence type="ECO:0000250" key="1"/>
<evidence type="ECO:0000250" key="2">
    <source>
        <dbReference type="UniProtKB" id="P35398"/>
    </source>
</evidence>
<evidence type="ECO:0000255" key="3">
    <source>
        <dbReference type="PROSITE-ProRule" id="PRU00407"/>
    </source>
</evidence>
<evidence type="ECO:0000255" key="4">
    <source>
        <dbReference type="PROSITE-ProRule" id="PRU01189"/>
    </source>
</evidence>
<evidence type="ECO:0000256" key="5">
    <source>
        <dbReference type="SAM" id="MobiDB-lite"/>
    </source>
</evidence>
<evidence type="ECO:0000269" key="6">
    <source>
    </source>
</evidence>
<evidence type="ECO:0000269" key="7">
    <source>
    </source>
</evidence>
<evidence type="ECO:0000269" key="8">
    <source>
    </source>
</evidence>
<evidence type="ECO:0000269" key="9">
    <source>
    </source>
</evidence>
<evidence type="ECO:0000269" key="10">
    <source>
    </source>
</evidence>
<evidence type="ECO:0000269" key="11">
    <source>
    </source>
</evidence>
<evidence type="ECO:0000269" key="12">
    <source>
    </source>
</evidence>
<evidence type="ECO:0000269" key="13">
    <source>
    </source>
</evidence>
<evidence type="ECO:0000269" key="14">
    <source>
    </source>
</evidence>
<evidence type="ECO:0000269" key="15">
    <source>
    </source>
</evidence>
<evidence type="ECO:0000269" key="16">
    <source>
    </source>
</evidence>
<evidence type="ECO:0000269" key="17">
    <source>
    </source>
</evidence>
<evidence type="ECO:0000269" key="18">
    <source>
    </source>
</evidence>
<evidence type="ECO:0000269" key="19">
    <source>
    </source>
</evidence>
<evidence type="ECO:0000269" key="20">
    <source>
    </source>
</evidence>
<evidence type="ECO:0000269" key="21">
    <source>
    </source>
</evidence>
<evidence type="ECO:0000269" key="22">
    <source>
    </source>
</evidence>
<evidence type="ECO:0000269" key="23">
    <source>
    </source>
</evidence>
<evidence type="ECO:0000269" key="24">
    <source>
    </source>
</evidence>
<evidence type="ECO:0000269" key="25">
    <source>
    </source>
</evidence>
<evidence type="ECO:0000269" key="26">
    <source>
    </source>
</evidence>
<evidence type="ECO:0000303" key="27">
    <source>
    </source>
</evidence>
<evidence type="ECO:0000303" key="28">
    <source>
    </source>
</evidence>
<evidence type="ECO:0000303" key="29">
    <source>
    </source>
</evidence>
<evidence type="ECO:0000303" key="30">
    <source>
    </source>
</evidence>
<evidence type="ECO:0000305" key="31"/>
<proteinExistence type="evidence at protein level"/>
<gene>
    <name type="primary">Rora</name>
    <name type="synonym">Nr1f1</name>
    <name type="synonym">Rzra</name>
</gene>
<sequence length="523" mass="58845">MESAPAAPDPAASEPGSSGSEAAAGSRETPLTQDTGRKSEAPGAGRRQSYASSSRGISVTKKTHTSQIEIIPCKICGDKSSGIHYGVITCEGCKGFFRRSQQSNATYSCPRQKNCLIDRTSRNRCQHCRLQKCLAVGMSRDAVKFGRMSKKQRDSLYAEVQKHRMQQQQRDHQQQPGEAEPLTPTYNISANGLTELHDDLSTYMDGHTPEGSKADSAVSSFYLDIQPSPDQSGLDINGIKPEPICDYTPASGFFPYCSFTNGETSPTVSMAELEHLAQNISKSHLETCQYLREELQQITWQTFLQEEIENYQNKQREVMWQLCAIKITEAIQYVVEFAKRIDGFMELCQNDQIVLLKAGSLEVVFIRMCRAFDSQNNTVYFDGKYASPDVFKSLGCEDFISFVFEFGKSLCSMHLTEDEIALFSAFVLMSADRSWLQEKVKIEKLQQKIQLALQHVLQKNHREDGILTKLICKVSTLRALCGRHTEKLMAFKAIYPDIVRLHFPPLYKELFTSEFEPAMQIDG</sequence>
<dbReference type="EMBL" id="U53228">
    <property type="protein sequence ID" value="AAC52513.1"/>
    <property type="molecule type" value="mRNA"/>
</dbReference>
<dbReference type="EMBL" id="Y08640">
    <property type="protein sequence ID" value="CAA69930.1"/>
    <property type="status" value="ALT_INIT"/>
    <property type="molecule type" value="mRNA"/>
</dbReference>
<dbReference type="EMBL" id="Z82994">
    <property type="protein sequence ID" value="CAB05396.1"/>
    <property type="molecule type" value="mRNA"/>
</dbReference>
<dbReference type="EMBL" id="S82720">
    <property type="protein sequence ID" value="AAB46801.2"/>
    <property type="molecule type" value="mRNA"/>
</dbReference>
<dbReference type="EMBL" id="D45910">
    <property type="protein sequence ID" value="BAA22970.1"/>
    <property type="molecule type" value="mRNA"/>
</dbReference>
<dbReference type="EMBL" id="BC003757">
    <property type="protein sequence ID" value="AAH03757.2"/>
    <property type="status" value="ALT_INIT"/>
    <property type="molecule type" value="mRNA"/>
</dbReference>
<dbReference type="CCDS" id="CCDS23314.1">
    <molecule id="P51448-1"/>
</dbReference>
<dbReference type="CCDS" id="CCDS72268.1">
    <molecule id="P51448-2"/>
</dbReference>
<dbReference type="PIR" id="S68517">
    <property type="entry name" value="S68517"/>
</dbReference>
<dbReference type="RefSeq" id="NP_001276845.1">
    <molecule id="P51448-2"/>
    <property type="nucleotide sequence ID" value="NM_001289916.2"/>
</dbReference>
<dbReference type="RefSeq" id="NP_038674.1">
    <molecule id="P51448-1"/>
    <property type="nucleotide sequence ID" value="NM_013646.3"/>
</dbReference>
<dbReference type="SMR" id="P51448"/>
<dbReference type="BioGRID" id="202956">
    <property type="interactions" value="1"/>
</dbReference>
<dbReference type="CORUM" id="P51448"/>
<dbReference type="DIP" id="DIP-35351N"/>
<dbReference type="FunCoup" id="P51448">
    <property type="interactions" value="2234"/>
</dbReference>
<dbReference type="IntAct" id="P51448">
    <property type="interactions" value="6"/>
</dbReference>
<dbReference type="MINT" id="P51448"/>
<dbReference type="STRING" id="10090.ENSMUSP00000034766"/>
<dbReference type="BindingDB" id="P51448"/>
<dbReference type="ChEMBL" id="CHEMBL3217403"/>
<dbReference type="iPTMnet" id="P51448"/>
<dbReference type="PhosphoSitePlus" id="P51448"/>
<dbReference type="PaxDb" id="10090-ENSMUSP00000034766"/>
<dbReference type="PeptideAtlas" id="P51448"/>
<dbReference type="ProteomicsDB" id="260916">
    <molecule id="P51448-1"/>
</dbReference>
<dbReference type="ProteomicsDB" id="260917">
    <molecule id="P51448-2"/>
</dbReference>
<dbReference type="Antibodypedia" id="4080">
    <property type="antibodies" value="562 antibodies from 38 providers"/>
</dbReference>
<dbReference type="DNASU" id="19883"/>
<dbReference type="Ensembl" id="ENSMUST00000034766.14">
    <molecule id="P51448-1"/>
    <property type="protein sequence ID" value="ENSMUSP00000034766.7"/>
    <property type="gene ID" value="ENSMUSG00000032238.18"/>
</dbReference>
<dbReference type="Ensembl" id="ENSMUST00000113624.3">
    <molecule id="P51448-2"/>
    <property type="protein sequence ID" value="ENSMUSP00000109254.3"/>
    <property type="gene ID" value="ENSMUSG00000032238.18"/>
</dbReference>
<dbReference type="GeneID" id="19883"/>
<dbReference type="KEGG" id="mmu:19883"/>
<dbReference type="UCSC" id="uc009qmx.2">
    <molecule id="P51448-1"/>
    <property type="organism name" value="mouse"/>
</dbReference>
<dbReference type="AGR" id="MGI:104661"/>
<dbReference type="CTD" id="6095"/>
<dbReference type="MGI" id="MGI:104661">
    <property type="gene designation" value="Rora"/>
</dbReference>
<dbReference type="VEuPathDB" id="HostDB:ENSMUSG00000032238"/>
<dbReference type="eggNOG" id="KOG4216">
    <property type="taxonomic scope" value="Eukaryota"/>
</dbReference>
<dbReference type="GeneTree" id="ENSGT00940000157387"/>
<dbReference type="HOGENOM" id="CLU_007368_2_0_1"/>
<dbReference type="InParanoid" id="P51448"/>
<dbReference type="OMA" id="VSMAELX"/>
<dbReference type="OrthoDB" id="8832025at2759"/>
<dbReference type="PhylomeDB" id="P51448"/>
<dbReference type="TreeFam" id="TF319910"/>
<dbReference type="Reactome" id="R-MMU-383280">
    <property type="pathway name" value="Nuclear Receptor transcription pathway"/>
</dbReference>
<dbReference type="Reactome" id="R-MMU-4090294">
    <property type="pathway name" value="SUMOylation of intracellular receptors"/>
</dbReference>
<dbReference type="BioGRID-ORCS" id="19883">
    <property type="hits" value="0 hits in 79 CRISPR screens"/>
</dbReference>
<dbReference type="ChiTaRS" id="Rora">
    <property type="organism name" value="mouse"/>
</dbReference>
<dbReference type="PRO" id="PR:P51448"/>
<dbReference type="Proteomes" id="UP000000589">
    <property type="component" value="Chromosome 9"/>
</dbReference>
<dbReference type="RNAct" id="P51448">
    <property type="molecule type" value="protein"/>
</dbReference>
<dbReference type="Bgee" id="ENSMUSG00000032238">
    <property type="expression patterns" value="Expressed in medial geniculate body and 290 other cell types or tissues"/>
</dbReference>
<dbReference type="ExpressionAtlas" id="P51448">
    <property type="expression patterns" value="baseline and differential"/>
</dbReference>
<dbReference type="GO" id="GO:0005730">
    <property type="term" value="C:nucleolus"/>
    <property type="evidence" value="ECO:0007669"/>
    <property type="project" value="Ensembl"/>
</dbReference>
<dbReference type="GO" id="GO:0005654">
    <property type="term" value="C:nucleoplasm"/>
    <property type="evidence" value="ECO:0000304"/>
    <property type="project" value="Reactome"/>
</dbReference>
<dbReference type="GO" id="GO:0005634">
    <property type="term" value="C:nucleus"/>
    <property type="evidence" value="ECO:0000314"/>
    <property type="project" value="UniProtKB"/>
</dbReference>
<dbReference type="GO" id="GO:0008013">
    <property type="term" value="F:beta-catenin binding"/>
    <property type="evidence" value="ECO:0000353"/>
    <property type="project" value="UniProtKB"/>
</dbReference>
<dbReference type="GO" id="GO:0003677">
    <property type="term" value="F:DNA binding"/>
    <property type="evidence" value="ECO:0000314"/>
    <property type="project" value="MGI"/>
</dbReference>
<dbReference type="GO" id="GO:0003700">
    <property type="term" value="F:DNA-binding transcription factor activity"/>
    <property type="evidence" value="ECO:0000314"/>
    <property type="project" value="UniProtKB"/>
</dbReference>
<dbReference type="GO" id="GO:0000981">
    <property type="term" value="F:DNA-binding transcription factor activity, RNA polymerase II-specific"/>
    <property type="evidence" value="ECO:0000314"/>
    <property type="project" value="GO_Central"/>
</dbReference>
<dbReference type="GO" id="GO:0098531">
    <property type="term" value="F:ligand-modulated transcription factor activity"/>
    <property type="evidence" value="ECO:0000250"/>
    <property type="project" value="UniProtKB"/>
</dbReference>
<dbReference type="GO" id="GO:0004879">
    <property type="term" value="F:nuclear receptor activity"/>
    <property type="evidence" value="ECO:0007669"/>
    <property type="project" value="InterPro"/>
</dbReference>
<dbReference type="GO" id="GO:0008142">
    <property type="term" value="F:oxysterol binding"/>
    <property type="evidence" value="ECO:0000250"/>
    <property type="project" value="UniProtKB"/>
</dbReference>
<dbReference type="GO" id="GO:0000978">
    <property type="term" value="F:RNA polymerase II cis-regulatory region sequence-specific DNA binding"/>
    <property type="evidence" value="ECO:0000314"/>
    <property type="project" value="MGI"/>
</dbReference>
<dbReference type="GO" id="GO:0000977">
    <property type="term" value="F:RNA polymerase II transcription regulatory region sequence-specific DNA binding"/>
    <property type="evidence" value="ECO:0000266"/>
    <property type="project" value="MGI"/>
</dbReference>
<dbReference type="GO" id="GO:0043565">
    <property type="term" value="F:sequence-specific DNA binding"/>
    <property type="evidence" value="ECO:0000314"/>
    <property type="project" value="UniProtKB"/>
</dbReference>
<dbReference type="GO" id="GO:0001223">
    <property type="term" value="F:transcription coactivator binding"/>
    <property type="evidence" value="ECO:0000353"/>
    <property type="project" value="UniProtKB"/>
</dbReference>
<dbReference type="GO" id="GO:0001222">
    <property type="term" value="F:transcription corepressor binding"/>
    <property type="evidence" value="ECO:0007669"/>
    <property type="project" value="Ensembl"/>
</dbReference>
<dbReference type="GO" id="GO:0008270">
    <property type="term" value="F:zinc ion binding"/>
    <property type="evidence" value="ECO:0007669"/>
    <property type="project" value="UniProtKB-KW"/>
</dbReference>
<dbReference type="GO" id="GO:0001525">
    <property type="term" value="P:angiogenesis"/>
    <property type="evidence" value="ECO:0000250"/>
    <property type="project" value="UniProtKB"/>
</dbReference>
<dbReference type="GO" id="GO:0071456">
    <property type="term" value="P:cellular response to hypoxia"/>
    <property type="evidence" value="ECO:0000250"/>
    <property type="project" value="UniProtKB"/>
</dbReference>
<dbReference type="GO" id="GO:0071347">
    <property type="term" value="P:cellular response to interleukin-1"/>
    <property type="evidence" value="ECO:0000314"/>
    <property type="project" value="MGI"/>
</dbReference>
<dbReference type="GO" id="GO:0036315">
    <property type="term" value="P:cellular response to sterol"/>
    <property type="evidence" value="ECO:0000250"/>
    <property type="project" value="UniProtKB"/>
</dbReference>
<dbReference type="GO" id="GO:0071356">
    <property type="term" value="P:cellular response to tumor necrosis factor"/>
    <property type="evidence" value="ECO:0000314"/>
    <property type="project" value="MGI"/>
</dbReference>
<dbReference type="GO" id="GO:0021930">
    <property type="term" value="P:cerebellar granule cell precursor proliferation"/>
    <property type="evidence" value="ECO:0000315"/>
    <property type="project" value="UniProtKB"/>
</dbReference>
<dbReference type="GO" id="GO:0021702">
    <property type="term" value="P:cerebellar Purkinje cell differentiation"/>
    <property type="evidence" value="ECO:0000315"/>
    <property type="project" value="MGI"/>
</dbReference>
<dbReference type="GO" id="GO:0046068">
    <property type="term" value="P:cGMP metabolic process"/>
    <property type="evidence" value="ECO:0000315"/>
    <property type="project" value="MGI"/>
</dbReference>
<dbReference type="GO" id="GO:0042632">
    <property type="term" value="P:cholesterol homeostasis"/>
    <property type="evidence" value="ECO:0000315"/>
    <property type="project" value="UniProtKB"/>
</dbReference>
<dbReference type="GO" id="GO:0032922">
    <property type="term" value="P:circadian regulation of gene expression"/>
    <property type="evidence" value="ECO:0000314"/>
    <property type="project" value="UniProtKB"/>
</dbReference>
<dbReference type="GO" id="GO:0030522">
    <property type="term" value="P:intracellular receptor signaling pathway"/>
    <property type="evidence" value="ECO:0000250"/>
    <property type="project" value="UniProtKB"/>
</dbReference>
<dbReference type="GO" id="GO:0042692">
    <property type="term" value="P:muscle cell differentiation"/>
    <property type="evidence" value="ECO:0000250"/>
    <property type="project" value="UniProtKB"/>
</dbReference>
<dbReference type="GO" id="GO:0043124">
    <property type="term" value="P:negative regulation of canonical NF-kappaB signal transduction"/>
    <property type="evidence" value="ECO:0000250"/>
    <property type="project" value="UniProtKB"/>
</dbReference>
<dbReference type="GO" id="GO:0045599">
    <property type="term" value="P:negative regulation of fat cell differentiation"/>
    <property type="evidence" value="ECO:0000315"/>
    <property type="project" value="GO_Central"/>
</dbReference>
<dbReference type="GO" id="GO:0050728">
    <property type="term" value="P:negative regulation of inflammatory response"/>
    <property type="evidence" value="ECO:0000250"/>
    <property type="project" value="UniProtKB"/>
</dbReference>
<dbReference type="GO" id="GO:0006809">
    <property type="term" value="P:nitric oxide biosynthetic process"/>
    <property type="evidence" value="ECO:0000315"/>
    <property type="project" value="MGI"/>
</dbReference>
<dbReference type="GO" id="GO:0042753">
    <property type="term" value="P:positive regulation of circadian rhythm"/>
    <property type="evidence" value="ECO:0000314"/>
    <property type="project" value="UniProtKB"/>
</dbReference>
<dbReference type="GO" id="GO:0045893">
    <property type="term" value="P:positive regulation of DNA-templated transcription"/>
    <property type="evidence" value="ECO:0000314"/>
    <property type="project" value="UniProtKB"/>
</dbReference>
<dbReference type="GO" id="GO:0045944">
    <property type="term" value="P:positive regulation of transcription by RNA polymerase II"/>
    <property type="evidence" value="ECO:0000314"/>
    <property type="project" value="MGI"/>
</dbReference>
<dbReference type="GO" id="GO:0010575">
    <property type="term" value="P:positive regulation of vascular endothelial growth factor production"/>
    <property type="evidence" value="ECO:0000250"/>
    <property type="project" value="UniProtKB"/>
</dbReference>
<dbReference type="GO" id="GO:0042752">
    <property type="term" value="P:regulation of circadian rhythm"/>
    <property type="evidence" value="ECO:0000315"/>
    <property type="project" value="UniProtKB"/>
</dbReference>
<dbReference type="GO" id="GO:0006355">
    <property type="term" value="P:regulation of DNA-templated transcription"/>
    <property type="evidence" value="ECO:0000314"/>
    <property type="project" value="UniProtKB"/>
</dbReference>
<dbReference type="GO" id="GO:0010906">
    <property type="term" value="P:regulation of glucose metabolic process"/>
    <property type="evidence" value="ECO:0000315"/>
    <property type="project" value="UniProtKB"/>
</dbReference>
<dbReference type="GO" id="GO:0043030">
    <property type="term" value="P:regulation of macrophage activation"/>
    <property type="evidence" value="ECO:0000315"/>
    <property type="project" value="MGI"/>
</dbReference>
<dbReference type="GO" id="GO:0008589">
    <property type="term" value="P:regulation of smoothened signaling pathway"/>
    <property type="evidence" value="ECO:0000315"/>
    <property type="project" value="UniProtKB"/>
</dbReference>
<dbReference type="GO" id="GO:0019218">
    <property type="term" value="P:regulation of steroid metabolic process"/>
    <property type="evidence" value="ECO:0000315"/>
    <property type="project" value="UniProtKB"/>
</dbReference>
<dbReference type="GO" id="GO:0006357">
    <property type="term" value="P:regulation of transcription by RNA polymerase II"/>
    <property type="evidence" value="ECO:0000314"/>
    <property type="project" value="GO_Central"/>
</dbReference>
<dbReference type="GO" id="GO:0072539">
    <property type="term" value="P:T-helper 17 cell differentiation"/>
    <property type="evidence" value="ECO:0000315"/>
    <property type="project" value="GO_Central"/>
</dbReference>
<dbReference type="GO" id="GO:0070328">
    <property type="term" value="P:triglyceride homeostasis"/>
    <property type="evidence" value="ECO:0000315"/>
    <property type="project" value="UniProtKB"/>
</dbReference>
<dbReference type="GO" id="GO:0006805">
    <property type="term" value="P:xenobiotic metabolic process"/>
    <property type="evidence" value="ECO:0000315"/>
    <property type="project" value="UniProtKB"/>
</dbReference>
<dbReference type="CDD" id="cd06968">
    <property type="entry name" value="NR_DBD_ROR"/>
    <property type="match status" value="1"/>
</dbReference>
<dbReference type="CDD" id="cd06939">
    <property type="entry name" value="NR_LBD_ROR_like"/>
    <property type="match status" value="1"/>
</dbReference>
<dbReference type="FunFam" id="1.10.565.10:FF:000005">
    <property type="entry name" value="Nuclear orphan receptor ROR-beta"/>
    <property type="match status" value="1"/>
</dbReference>
<dbReference type="FunFam" id="3.30.50.10:FF:000003">
    <property type="entry name" value="Nuclear orphan receptor ROR-beta"/>
    <property type="match status" value="1"/>
</dbReference>
<dbReference type="Gene3D" id="3.30.50.10">
    <property type="entry name" value="Erythroid Transcription Factor GATA-1, subunit A"/>
    <property type="match status" value="1"/>
</dbReference>
<dbReference type="Gene3D" id="1.10.565.10">
    <property type="entry name" value="Retinoid X Receptor"/>
    <property type="match status" value="1"/>
</dbReference>
<dbReference type="InterPro" id="IPR035500">
    <property type="entry name" value="NHR-like_dom_sf"/>
</dbReference>
<dbReference type="InterPro" id="IPR044101">
    <property type="entry name" value="NR_DBD_ROR"/>
</dbReference>
<dbReference type="InterPro" id="IPR000536">
    <property type="entry name" value="Nucl_hrmn_rcpt_lig-bd"/>
</dbReference>
<dbReference type="InterPro" id="IPR001723">
    <property type="entry name" value="Nuclear_hrmn_rcpt"/>
</dbReference>
<dbReference type="InterPro" id="IPR003079">
    <property type="entry name" value="ROR_rcpt"/>
</dbReference>
<dbReference type="InterPro" id="IPR001628">
    <property type="entry name" value="Znf_hrmn_rcpt"/>
</dbReference>
<dbReference type="InterPro" id="IPR013088">
    <property type="entry name" value="Znf_NHR/GATA"/>
</dbReference>
<dbReference type="PANTHER" id="PTHR45805">
    <property type="entry name" value="NUCLEAR HORMONE RECEPTOR HR3-RELATED"/>
    <property type="match status" value="1"/>
</dbReference>
<dbReference type="PANTHER" id="PTHR45805:SF3">
    <property type="entry name" value="NUCLEAR RECEPTOR ROR-ALPHA"/>
    <property type="match status" value="1"/>
</dbReference>
<dbReference type="Pfam" id="PF00104">
    <property type="entry name" value="Hormone_recep"/>
    <property type="match status" value="1"/>
</dbReference>
<dbReference type="Pfam" id="PF00105">
    <property type="entry name" value="zf-C4"/>
    <property type="match status" value="1"/>
</dbReference>
<dbReference type="PRINTS" id="PR01293">
    <property type="entry name" value="RORNUCRECPTR"/>
</dbReference>
<dbReference type="PRINTS" id="PR00398">
    <property type="entry name" value="STRDHORMONER"/>
</dbReference>
<dbReference type="PRINTS" id="PR00047">
    <property type="entry name" value="STROIDFINGER"/>
</dbReference>
<dbReference type="SMART" id="SM00430">
    <property type="entry name" value="HOLI"/>
    <property type="match status" value="1"/>
</dbReference>
<dbReference type="SMART" id="SM00399">
    <property type="entry name" value="ZnF_C4"/>
    <property type="match status" value="1"/>
</dbReference>
<dbReference type="SUPFAM" id="SSF57716">
    <property type="entry name" value="Glucocorticoid receptor-like (DNA-binding domain)"/>
    <property type="match status" value="1"/>
</dbReference>
<dbReference type="SUPFAM" id="SSF48508">
    <property type="entry name" value="Nuclear receptor ligand-binding domain"/>
    <property type="match status" value="1"/>
</dbReference>
<dbReference type="PROSITE" id="PS51843">
    <property type="entry name" value="NR_LBD"/>
    <property type="match status" value="1"/>
</dbReference>
<dbReference type="PROSITE" id="PS00031">
    <property type="entry name" value="NUCLEAR_REC_DBD_1"/>
    <property type="match status" value="1"/>
</dbReference>
<dbReference type="PROSITE" id="PS51030">
    <property type="entry name" value="NUCLEAR_REC_DBD_2"/>
    <property type="match status" value="1"/>
</dbReference>
<keyword id="KW-0010">Activator</keyword>
<keyword id="KW-0877">Alternative promoter usage</keyword>
<keyword id="KW-0090">Biological rhythms</keyword>
<keyword id="KW-0217">Developmental protein</keyword>
<keyword id="KW-0903">Direct protein sequencing</keyword>
<keyword id="KW-0225">Disease variant</keyword>
<keyword id="KW-0238">DNA-binding</keyword>
<keyword id="KW-1017">Isopeptide bond</keyword>
<keyword id="KW-0479">Metal-binding</keyword>
<keyword id="KW-0488">Methylation</keyword>
<keyword id="KW-0539">Nucleus</keyword>
<keyword id="KW-0597">Phosphoprotein</keyword>
<keyword id="KW-0675">Receptor</keyword>
<keyword id="KW-1185">Reference proteome</keyword>
<keyword id="KW-0804">Transcription</keyword>
<keyword id="KW-0805">Transcription regulation</keyword>
<keyword id="KW-0832">Ubl conjugation</keyword>
<keyword id="KW-0862">Zinc</keyword>
<keyword id="KW-0863">Zinc-finger</keyword>
<name>RORA_MOUSE</name>
<accession>P51448</accession>
<accession>P70283</accession>
<accession>P97741</accession>
<accession>P97773</accession>
<accession>Q923G1</accession>
<feature type="chain" id="PRO_0000053513" description="Nuclear receptor ROR-alpha">
    <location>
        <begin position="1"/>
        <end position="523"/>
    </location>
</feature>
<feature type="domain" description="NR LBD" evidence="4">
    <location>
        <begin position="272"/>
        <end position="510"/>
    </location>
</feature>
<feature type="DNA-binding region" description="Nuclear receptor" evidence="3">
    <location>
        <begin position="73"/>
        <end position="138"/>
    </location>
</feature>
<feature type="zinc finger region" description="NR C4-type" evidence="3">
    <location>
        <begin position="73"/>
        <end position="93"/>
    </location>
</feature>
<feature type="zinc finger region" description="NR C4-type" evidence="3">
    <location>
        <begin position="109"/>
        <end position="133"/>
    </location>
</feature>
<feature type="region of interest" description="Disordered" evidence="5">
    <location>
        <begin position="1"/>
        <end position="63"/>
    </location>
</feature>
<feature type="region of interest" description="Disordered" evidence="5">
    <location>
        <begin position="154"/>
        <end position="183"/>
    </location>
</feature>
<feature type="short sequence motif" description="AF-2">
    <location>
        <begin position="506"/>
        <end position="511"/>
    </location>
</feature>
<feature type="compositionally biased region" description="Low complexity" evidence="5">
    <location>
        <begin position="1"/>
        <end position="26"/>
    </location>
</feature>
<feature type="modified residue" description="N6-methyllysine" evidence="2">
    <location>
        <position position="38"/>
    </location>
</feature>
<feature type="modified residue" description="Phosphothreonine; by MAPK1" evidence="2">
    <location>
        <position position="183"/>
    </location>
</feature>
<feature type="cross-link" description="Glycyl lysine isopeptide (Lys-Gly) (interchain with G-Cter in SUMO)" evidence="1">
    <location>
        <position position="240"/>
    </location>
</feature>
<feature type="splice variant" id="VSP_003658" description="In isoform 4." evidence="27 28 29 30">
    <original>MESAPAAPDPAASEPGSSGSEAAAGSRETPLTQDTGRKSEAPGAGRRQSYASSSRGISVTKKTHTS</original>
    <variation>MYFVIAAMKA</variation>
    <location>
        <begin position="1"/>
        <end position="66"/>
    </location>
</feature>
<feature type="sequence variant" description="In SG; disturbance of Purkinje cell and muscle development, lipid metabolism, circadian behavior and immune system functioning." evidence="26">
    <location>
        <begin position="275"/>
        <end position="314"/>
    </location>
</feature>
<feature type="sequence conflict" description="In Ref. 2; CAA69930." evidence="31" ref="2">
    <original>H</original>
    <variation>R</variation>
    <location>
        <position position="163"/>
    </location>
</feature>
<feature type="sequence conflict" description="In Ref. 2; CAA69930." evidence="31" ref="2">
    <original>EP</original>
    <variation>T</variation>
    <location>
        <begin position="180"/>
        <end position="181"/>
    </location>
</feature>
<feature type="sequence conflict" description="In Ref. 4; AAB46801/BAA22970." evidence="31" ref="4">
    <original>L</original>
    <variation>I</variation>
    <location>
        <position position="182"/>
    </location>
</feature>
<feature type="sequence conflict" description="In Ref. 2; CAA69930." evidence="31" ref="2">
    <original>LT</original>
    <variation>SA</variation>
    <location>
        <begin position="193"/>
        <end position="194"/>
    </location>
</feature>
<feature type="sequence conflict" description="In Ref. 2; CAA69930." evidence="31" ref="2">
    <original>L</original>
    <variation>W</variation>
    <location>
        <position position="304"/>
    </location>
</feature>
<feature type="sequence conflict" description="In Ref. 4; AAB46801/BAA22970." evidence="31" ref="4">
    <location>
        <position position="315"/>
    </location>
</feature>
<feature type="sequence conflict" description="In Ref. 2; CAA69930." evidence="31" ref="2">
    <original>E</original>
    <variation>G</variation>
    <location>
        <position position="362"/>
    </location>
</feature>
<feature type="sequence conflict" description="In Ref. 2; CAA69930." evidence="31" ref="2">
    <original>R</original>
    <variation>P</variation>
    <location>
        <position position="433"/>
    </location>
</feature>
<feature type="sequence conflict" description="In Ref. 2; CAA69930." evidence="31" ref="2">
    <original>QL</original>
    <variation>HM</variation>
    <location>
        <begin position="450"/>
        <end position="451"/>
    </location>
</feature>
<feature type="sequence conflict" description="In Ref. 4; AAB46801/BAA22970." evidence="31" ref="4">
    <original>K</original>
    <variation>N</variation>
    <location>
        <position position="487"/>
    </location>
</feature>
<organism>
    <name type="scientific">Mus musculus</name>
    <name type="common">Mouse</name>
    <dbReference type="NCBI Taxonomy" id="10090"/>
    <lineage>
        <taxon>Eukaryota</taxon>
        <taxon>Metazoa</taxon>
        <taxon>Chordata</taxon>
        <taxon>Craniata</taxon>
        <taxon>Vertebrata</taxon>
        <taxon>Euteleostomi</taxon>
        <taxon>Mammalia</taxon>
        <taxon>Eutheria</taxon>
        <taxon>Euarchontoglires</taxon>
        <taxon>Glires</taxon>
        <taxon>Rodentia</taxon>
        <taxon>Myomorpha</taxon>
        <taxon>Muroidea</taxon>
        <taxon>Muridae</taxon>
        <taxon>Murinae</taxon>
        <taxon>Mus</taxon>
        <taxon>Mus</taxon>
    </lineage>
</organism>
<comment type="function">
    <text evidence="6 7 8 10 11 12 13 14 16 17 20 21 23 24 25">Nuclear receptor that binds DNA as a monomer to ROR response elements (RORE) containing a single core motif half-site 5'-AGGTCA-3' preceded by a short A-T-rich sequence. Key regulator of embryonic development, cellular differentiation, immunity, circadian rhythm as well as lipid, steroid, xenobiotics and glucose metabolism. Considered to have intrinsic transcriptional activity, have some natural ligands like oxysterols that act as agonists (25-hydroxycholesterol) or inverse agonists (7-oxygenated sterols), enhancing or repressing the transcriptional activity, respectively. Recruits distinct combinations of cofactors to target genes regulatory regions to modulate their transcriptional expression, depending on the tissue, time and promoter contexts. Regulates genes involved in photoreceptor development including OPN1SW, OPN1SM and ARR3 and skeletal muscle development with MYOD1. Required for proper cerebellum development, regulates SHH gene expression, among others, to induce granule cells proliferation as well as expression of genes involved in calcium-mediated signal transduction. Regulates the circadian expression of several clock genes, including CLOCK, BMAL1, NPAS2 and CRY1. Competes with NR1D1 for binding to their shared DNA response element on some clock genes such as BMAL1, CRY1 and NR1D1 itself, resulting in NR1D1-mediated repression or RORA-mediated activation of clock genes expression, leading to the circadian pattern of clock genes expression. Therefore influences the period length and stability of the clock. Regulates genes involved in lipid metabolism such as apolipoproteins APOA1, APOA5, APOC3 and PPARG. In liver, has specific and redundant functions with RORC as positive or negative modulator of expression of genes encoding phase I and phase II proteins involved in the metabolism of lipids, steroids and xenobiotics, such as CYP7B1 and SULT2A1. Induces a rhythmic expression of some of these genes. In addition, interplays functionally with NR1H2 and NR1H3 for the regulation of genes involved in cholesterol metabolism. Also involved in the regulation of hepatic glucose metabolism through the modulation of G6PC1 and PCK1. In adipose tissue, plays a role as negative regulator of adipocyte differentiation, probably acting through dual mechanisms. May suppress CEBPB-dependent adipogenesis through direct interaction and PPARG-dependent adipogenesis through competition for DNA-binding. Downstream of IL6 and TGFB and synergistically with RORC isoform 2, is implicated in the lineage specification of uncommitted CD4(+) T-helper (T(H)) cells into T(H)17 cells, antagonizing the T(H)1 program. Probably regulates IL17 and IL17F expression on T(H) by binding to the essential enhancer conserved non-coding sequence 2 (CNS2) in the IL17-IL17F locus. Involved in hypoxia signaling by interacting with and activating the transcriptional activity of HIF1A. May inhibit cell growth in response to cellular stress. May exert an anti-inflammatory role by inducing CHUK expression and inhibiting NF-kappa-B signaling.</text>
</comment>
<comment type="subunit">
    <text evidence="2 7 9 15 16 18 19 20 21 22 25">Monomer. Interacts (via the DNA-binding domain) with HIF1A; the interaction enhances HIF1A transcription under hypoxia through increasing protein stability. Interacts with CEBPB; the interaction disrupts the interaction CEBPB:EP300. Interacts with the coactivators NCOA2, PPARGC1A (via LXXLL motif), EP300 and MED1. Interacts with the corepressor NCOR1. Interacts with MAGED1 and CTNNB1. Interacts with CRY1 and PER2. Interacts (via AF-2 motif) with PROX1. Interacts with NRIP1. Isoform 4 interacts (via AF-2 motif) with isoform 1 of FOXP3 (via LXXLL motif) (By similarity).</text>
</comment>
<comment type="interaction">
    <interactant intactId="EBI-1169722">
        <id>P51448</id>
    </interactant>
    <interactant intactId="EBI-1169713">
        <id>P54254</id>
        <label>Atxn1</label>
    </interactant>
    <organismsDiffer>false</organismsDiffer>
    <experiments>3</experiments>
</comment>
<comment type="interaction">
    <interactant intactId="EBI-1169722">
        <id>P51448</id>
    </interactant>
    <interactant intactId="EBI-1801274">
        <id>Q9QYH6</id>
        <label>Maged1</label>
    </interactant>
    <organismsDiffer>false</organismsDiffer>
    <experiments>5</experiments>
</comment>
<comment type="subcellular location">
    <subcellularLocation>
        <location evidence="3 23 25">Nucleus</location>
    </subcellularLocation>
</comment>
<comment type="alternative products">
    <event type="alternative promoter"/>
    <isoform>
        <id>P51448-1</id>
        <name>1</name>
        <name>Alpha-1</name>
        <sequence type="displayed"/>
    </isoform>
    <isoform>
        <id>P51448-3</id>
        <name>2</name>
        <name>Alpha-2</name>
        <sequence type="not described"/>
    </isoform>
    <isoform>
        <id>P51448-4</id>
        <name>3</name>
        <name>Alpha-3</name>
        <sequence type="not described"/>
    </isoform>
    <isoform>
        <id>P51448-2</id>
        <name>4</name>
        <name>Alpha-4</name>
        <sequence type="described" ref="VSP_003658"/>
    </isoform>
</comment>
<comment type="tissue specificity">
    <text evidence="10 12 13 23">Expressed in cerebellum, heart, liver, lung, kidney, retina and brown and white adipose tissues. Expressed in the subset of mature Th17 cells.</text>
</comment>
<comment type="developmental stage">
    <text evidence="7 14 16">In cerebellum, expression begins at 12.5 dpc. In the developing retina, first expressed at 17 dpc in the ganglion cell layer. At P3, expressed in the inner border of the neuroblasitic border (presumptive amacrine cells). By P6, levels increase in developing cones. Expression found in the presumptive bipolar cells by P9. During adipocyte differentiation, expression gradually increases.</text>
</comment>
<comment type="induction">
    <text evidence="12 20 23 24">In T(H) cells, induced upon antigen receptor ligation in the presence of IL6 and TGB1 (via STAT3). Oscillates diurnally in central nervous system. In liver, Isoform 1 oscillates diurnally but not isoform 4.</text>
</comment>
<comment type="domain">
    <text evidence="2">The AF-2 (activation function-2) motif is required for recruiting coregulators containing LXXLL motifs.</text>
</comment>
<comment type="PTM">
    <text evidence="2">Phosphorylation by conventional PKCs in neurons inhibits transcriptional activity. Phosphorylated on Thr-183 by MAPK1/ERK1 in vitro.</text>
</comment>
<comment type="PTM">
    <text evidence="2">Sumoylated by SENP1 and SENP2. Sumoylation, promoted by PIAS2, PIAS3, PIAS4 but not PIAS1, enhances the transcriptional activity. Desumoylated by SENP1.</text>
</comment>
<comment type="PTM">
    <text evidence="2">Ubiquitinated, leading to its degradation by the proteasome. Proteasomal degradation is required for efficient transcriptional activity and is prevented by HR.</text>
</comment>
<comment type="PTM">
    <molecule>Isoform 1</molecule>
    <text evidence="2">Monomethylated at Lys-38 by EZH2, this creates a degron recognized by a DCX (DDB1-DCAF1/VPRBP-CUL4A-RBX1) E3 ubiquitin ligase complex.</text>
</comment>
<comment type="disease">
    <text evidence="6 7 8 10 11 13 14 26">Defects in Rora are the cause of the staggerer (SG) mutant phenotype which is characterized by disturbance of Purkinje cell development and immune system functioning. This phenotype exhibits lower body weight, reduced adiposity, decreased plasma cholesterol, triglyceride and apolipoprotein CIII levels, and is resistant to diet-induced obesity. Also has abnormal circadian rhythms.</text>
</comment>
<comment type="similarity">
    <text evidence="31">Belongs to the nuclear hormone receptor family. NR1 subfamily.</text>
</comment>
<comment type="sequence caution" evidence="31">
    <conflict type="erroneous initiation">
        <sequence resource="EMBL-CDS" id="AAH03757"/>
    </conflict>
    <text>Truncated N-terminus.</text>
</comment>
<comment type="sequence caution" evidence="31">
    <conflict type="erroneous initiation">
        <sequence resource="EMBL-CDS" id="CAA69930"/>
    </conflict>
    <text>Truncated N-terminus.</text>
</comment>
<reference key="1">
    <citation type="journal article" date="1996" name="Nature">
        <title>Disruption of the nuclear hormone receptor RORalpha in staggerer mice.</title>
        <authorList>
            <person name="Hamilton B.A."/>
            <person name="Frankel W.N."/>
            <person name="Kerrebrock A.W."/>
            <person name="Hawkins T.L."/>
            <person name="Fitzhugh W."/>
            <person name="Kusumi K."/>
            <person name="Russell L.B."/>
            <person name="Mueller K.L."/>
            <person name="Vanberkel V."/>
            <person name="Birren B.W."/>
            <person name="Kruglyak L."/>
            <person name="Lander E.S."/>
        </authorList>
    </citation>
    <scope>NUCLEOTIDE SEQUENCE [MRNA] (ISOFORM 1)</scope>
    <source>
        <strain>C57BL/6J</strain>
        <tissue>Cerebellum</tissue>
    </source>
</reference>
<reference key="2">
    <citation type="journal article" date="1994" name="Mol. Endocrinol.">
        <title>RZRs, a new family of retinoid-related orphan receptors that function as both monomers and homodimers.</title>
        <authorList>
            <person name="Carlberg C."/>
            <person name="Hooft van Huijsduijnen R."/>
            <person name="Staple J.K."/>
            <person name="Delamarter J.F."/>
            <person name="Becker-Andre M."/>
        </authorList>
    </citation>
    <scope>NUCLEOTIDE SEQUENCE [MRNA] (ISOFORM 4)</scope>
    <source>
        <strain>C57BL/6J</strain>
        <tissue>Skin</tissue>
    </source>
</reference>
<reference key="3">
    <citation type="journal article" date="1997" name="Genomics">
        <title>The structural integrity of ROR alpha isoforms is mutated in staggerer mice: cerebellar coexpression of ROR alpha1 and ROR alpha4.</title>
        <authorList>
            <person name="Matysiak-Scholze U."/>
            <person name="Nehls M.C."/>
        </authorList>
    </citation>
    <scope>NUCLEOTIDE SEQUENCE [MRNA] (ISOFORM 4)</scope>
    <scope>VARIANT SG 275-HIS--LYS-314 DEL</scope>
    <source>
        <strain>C57BL/6J</strain>
        <tissue>Cerebellum</tissue>
    </source>
</reference>
<reference key="4">
    <citation type="journal article" date="1995" name="Brain Res. Mol. Brain Res.">
        <title>An orphan nuclear receptor, mROR alpha, and its spatial expression in adult mouse brain.</title>
        <authorList>
            <person name="Matsui T."/>
            <person name="Sashihara S."/>
            <person name="Oh Y."/>
            <person name="Waxman S.G."/>
        </authorList>
    </citation>
    <scope>NUCLEOTIDE SEQUENCE [MRNA] (ISOFORM 4)</scope>
    <source>
        <tissue>Brain</tissue>
    </source>
</reference>
<reference key="5">
    <citation type="journal article" date="2004" name="Genome Res.">
        <title>The status, quality, and expansion of the NIH full-length cDNA project: the Mammalian Gene Collection (MGC).</title>
        <authorList>
            <consortium name="The MGC Project Team"/>
        </authorList>
    </citation>
    <scope>NUCLEOTIDE SEQUENCE [LARGE SCALE MRNA] (ISOFORM 4)</scope>
    <source>
        <strain>FVB/N</strain>
        <tissue>Mammary gland</tissue>
    </source>
</reference>
<reference key="6">
    <citation type="submission" date="2007-04" db="UniProtKB">
        <authorList>
            <person name="Lubec G."/>
            <person name="Kang S.U."/>
        </authorList>
    </citation>
    <scope>PROTEIN SEQUENCE OF 39-61</scope>
    <scope>IDENTIFICATION BY MASS SPECTROMETRY</scope>
    <source>
        <strain>C57BL/6J</strain>
        <tissue>Brain</tissue>
    </source>
</reference>
<reference key="7">
    <citation type="journal article" date="2001" name="J. Biol. Chem.">
        <title>Transcriptional regulation of apolipoprotein C-III gene expression by the orphan nuclear receptor RORalpha.</title>
        <authorList>
            <person name="Raspe E."/>
            <person name="Duez H."/>
            <person name="Gervois P."/>
            <person name="Fievet C."/>
            <person name="Fruchart J.C."/>
            <person name="Besnard S."/>
            <person name="Mariani J."/>
            <person name="Tedgui A."/>
            <person name="Staels B."/>
        </authorList>
    </citation>
    <scope>FUNCTION IN TRIGLYCERIDE METABOLISM</scope>
    <scope>DNA-BINDING</scope>
    <scope>CHARACTERIZATION OF VARIANT SG PHENOTYPE</scope>
</reference>
<reference key="8">
    <citation type="journal article" date="2003" name="Neuron">
        <title>RORalpha coordinates reciprocal signaling in cerebellar development through sonic hedgehog and calcium-dependent pathways.</title>
        <authorList>
            <person name="Gold D.A."/>
            <person name="Baek S.H."/>
            <person name="Schork N.J."/>
            <person name="Rose D.W."/>
            <person name="Larsen D.D."/>
            <person name="Sachs B.D."/>
            <person name="Rosenfeld M.G."/>
            <person name="Hamilton B.A."/>
        </authorList>
    </citation>
    <scope>FUNCTION IN CEREBELLAR DEVELOPMENT</scope>
    <scope>DEVELOPMENTAL STAGE</scope>
    <scope>INTERACTION WITH CTNNB1</scope>
    <scope>CHARACTERIZATION OF VARIANT SG PHENOTYPE</scope>
</reference>
<reference key="9">
    <citation type="journal article" date="2005" name="Nat. Struct. Mol. Biol.">
        <title>The orphan nuclear receptor RORalpha regulates circadian transcription of the mammalian core-clock Bmal1.</title>
        <authorList>
            <person name="Akashi M."/>
            <person name="Takumi T."/>
        </authorList>
    </citation>
    <scope>FUNCTION IN CIRCADIAN RHYTHMS</scope>
    <scope>CHARACTERIZATION OF VARIANT SG PHENOTYPE</scope>
</reference>
<reference key="10">
    <citation type="journal article" date="2007" name="Nature">
        <title>Transcriptional coactivator PGC-1alpha integrates the mammalian clock and energy metabolism.</title>
        <authorList>
            <person name="Liu C."/>
            <person name="Li S."/>
            <person name="Liu T."/>
            <person name="Borjigin J."/>
            <person name="Lin J.D."/>
        </authorList>
    </citation>
    <scope>INTERACTION WITH PPARGC1A</scope>
</reference>
<reference key="11">
    <citation type="journal article" date="2007" name="Physiol. Genomics">
        <title>Gene expression profiling reveals a regulatory role for ROR alpha and ROR gamma in phase I and phase II metabolism.</title>
        <authorList>
            <person name="Kang H.S."/>
            <person name="Angers M."/>
            <person name="Beak J.Y."/>
            <person name="Wu X."/>
            <person name="Gimble J.M."/>
            <person name="Wada T."/>
            <person name="Xie W."/>
            <person name="Collins J.B."/>
            <person name="Grissom S.F."/>
            <person name="Jetten A.M."/>
        </authorList>
    </citation>
    <scope>FUNCTION IN METABOLISM REGULATION</scope>
    <scope>CHARACTERIZATION OF VARIANT SG PHENOTYPE</scope>
    <scope>TISSUE SPECIFICITY</scope>
</reference>
<reference key="12">
    <citation type="journal article" date="2008" name="Mol. Pharmacol.">
        <title>Identification of oxysterol 7alpha-hydroxylase (Cyp7b1) as a novel retinoid-related orphan receptor alpha (RORalpha) (NR1F1) target gene and a functional cross-talk between RORalpha and liver X receptor (NR1H3).</title>
        <authorList>
            <person name="Wada T."/>
            <person name="Kang H.S."/>
            <person name="Angers M."/>
            <person name="Gong H."/>
            <person name="Bhatia S."/>
            <person name="Khadem S."/>
            <person name="Ren S."/>
            <person name="Ellis E."/>
            <person name="Strom S.C."/>
            <person name="Jetten A.M."/>
            <person name="Xie W."/>
        </authorList>
    </citation>
    <scope>FUNCTION IN METABOLISM REGULATION</scope>
    <scope>CHARACTERIZATION OF VARIANT SG PHENOTYPE</scope>
    <scope>DNA-BINDING</scope>
</reference>
<reference key="13">
    <citation type="journal article" date="2008" name="Exp. Biol. Med.">
        <title>The emerging role of nuclear receptor RORalpha and its crosstalk with LXR in xeno- and endobiotic gene regulation.</title>
        <authorList>
            <person name="Wada T."/>
            <person name="Kang H.S."/>
            <person name="Jetten A.M."/>
            <person name="Xie W."/>
        </authorList>
    </citation>
    <scope>REVIEW OF FUNCTION IN METABOLISM REGULATION</scope>
</reference>
<reference key="14">
    <citation type="journal article" date="2008" name="Immunity">
        <title>T helper 17 lineage differentiation is programmed by orphan nuclear receptors ROR alpha and ROR gamma.</title>
        <authorList>
            <person name="Yang X.O."/>
            <person name="Pappu B.P."/>
            <person name="Nurieva R."/>
            <person name="Akimzhanov A."/>
            <person name="Kang H.S."/>
            <person name="Chung Y."/>
            <person name="Ma L."/>
            <person name="Shah B."/>
            <person name="Panopoulos A.D."/>
            <person name="Schluns K.S."/>
            <person name="Watowich S.S."/>
            <person name="Tian Q."/>
            <person name="Jetten A.M."/>
            <person name="Dong C."/>
        </authorList>
    </citation>
    <scope>FUNCTION IN T(H)17 CELLS DIFFERENTIATION</scope>
    <scope>INDUCTION BY IL6 AND TGFB1</scope>
    <scope>TISSUE SPECIFICITY</scope>
</reference>
<reference key="15">
    <citation type="journal article" date="2008" name="J. Biol. Chem.">
        <title>The orphan nuclear receptor, RORalpha, regulates gene expression that controls lipid metabolism: staggerer (SG/SG) mice are resistant to diet-induced obesity.</title>
        <authorList>
            <person name="Lau P."/>
            <person name="Fitzsimmons R.L."/>
            <person name="Raichur S."/>
            <person name="Wang S.C."/>
            <person name="Lechtken A."/>
            <person name="Muscat G.E."/>
        </authorList>
    </citation>
    <scope>FUNCTION IN LIPID METABOLISM REGULATION</scope>
    <scope>TISSUE SPECIFICITY</scope>
    <scope>CHARACTERIZATION OF VARIANT SG PHENOTYPE</scope>
</reference>
<reference key="16">
    <citation type="journal article" date="2008" name="Science">
        <title>Absence of the SRC-2 coactivator results in a glycogenopathy resembling Von Gierke's disease.</title>
        <authorList>
            <person name="Chopra A.R."/>
            <person name="Louet J.F."/>
            <person name="Saha P."/>
            <person name="An J."/>
            <person name="Demayo F."/>
            <person name="Xu J."/>
            <person name="York B."/>
            <person name="Karpen S."/>
            <person name="Finegold M."/>
            <person name="Moore D."/>
            <person name="Chan L."/>
            <person name="Newgard C.B."/>
            <person name="O'Malley B.W."/>
        </authorList>
    </citation>
    <scope>INTERACTION WITH NCOA2</scope>
</reference>
<reference key="17">
    <citation type="journal article" date="2009" name="J. Neurochem.">
        <title>Retinoic acid receptor-related orphan receptor alpha regulates a subset of cone genes during mouse retinal development.</title>
        <authorList>
            <person name="Fujieda H."/>
            <person name="Bremner R."/>
            <person name="Mears A.J."/>
            <person name="Sasaki H."/>
        </authorList>
    </citation>
    <scope>FUNCTION</scope>
    <scope>DEVELOPMENTAL STAGE</scope>
    <scope>CHARACTERIZATION OF VARIANT SG</scope>
</reference>
<reference key="18">
    <citation type="journal article" date="2009" name="Mol. Endocrinol.">
        <title>The orphan nuclear receptor RORalpha restrains adipocyte differentiation through a reduction of C/EBPbeta activity and perilipin gene expression.</title>
        <authorList>
            <person name="Ohoka N."/>
            <person name="Kato S."/>
            <person name="Takahashi Y."/>
            <person name="Hayashi H."/>
            <person name="Sato R."/>
        </authorList>
    </citation>
    <scope>FUNCTION IN ADIPOGENESIS</scope>
    <scope>INTERACTION WITH CEBPB</scope>
    <scope>DEVELOPMENTAL STAGE</scope>
</reference>
<reference key="19">
    <citation type="journal article" date="2009" name="Nucl. Recept. Signal.">
        <title>Retinoid-related orphan receptors (RORs): critical roles in development, immunity, circadian rhythm, and cellular metabolism.</title>
        <authorList>
            <person name="Jetten A.M."/>
        </authorList>
    </citation>
    <scope>REVIEW ON FUNCTION</scope>
</reference>
<reference key="20">
    <citation type="journal article" date="2010" name="EMBO J.">
        <title>Interaction of MAGED1 with nuclear receptors affects circadian clock function.</title>
        <authorList>
            <person name="Wang X."/>
            <person name="Tang J."/>
            <person name="Xing L."/>
            <person name="Shi G."/>
            <person name="Ruan H."/>
            <person name="Gu X."/>
            <person name="Liu Z."/>
            <person name="Wu X."/>
            <person name="Gao X."/>
            <person name="Xu Y."/>
        </authorList>
    </citation>
    <scope>INTERACTION WITH MAGED1</scope>
</reference>
<reference key="21">
    <citation type="journal article" date="2010" name="Genes Dev.">
        <title>The mammalian clock component PERIOD2 coordinates circadian output by interaction with nuclear receptors.</title>
        <authorList>
            <person name="Schmutz I."/>
            <person name="Ripperger J.A."/>
            <person name="Baeriswyl-Aebischer S."/>
            <person name="Albrecht U."/>
        </authorList>
    </citation>
    <scope>INTERACTION WITH PER2</scope>
</reference>
<reference key="22">
    <citation type="journal article" date="2010" name="J. Biol. Chem.">
        <title>Modulation of retinoic acid receptor-related orphan receptor alpha and gamma activity by 7-oxygenated sterol ligands.</title>
        <authorList>
            <person name="Wang Y."/>
            <person name="Kumar N."/>
            <person name="Solt L.A."/>
            <person name="Richardson T.I."/>
            <person name="Helvering L.M."/>
            <person name="Crumbley C."/>
            <person name="Garcia-Ordonez R.D."/>
            <person name="Stayrook K.R."/>
            <person name="Zhang X."/>
            <person name="Novick S."/>
            <person name="Chalmers M.J."/>
            <person name="Griffin P.R."/>
            <person name="Burris T.P."/>
        </authorList>
    </citation>
    <scope>FUNCTION IN GLUCOSE METABOLISM REGULATION</scope>
    <scope>IDENTIFICATION OF LIGANDS</scope>
</reference>
<reference key="23">
    <citation type="journal article" date="2011" name="J. Biol. Rhythms">
        <title>Modulation of clock gene expression by the transcriptional coregulator receptor interacting protein 140 (RIP140).</title>
        <authorList>
            <person name="Poliandri A.H."/>
            <person name="Gamsby J.J."/>
            <person name="Christian M."/>
            <person name="Spinella M.J."/>
            <person name="Loros J.J."/>
            <person name="Dunlap J.C."/>
            <person name="Parker M.G."/>
        </authorList>
    </citation>
    <scope>FUNCTION</scope>
    <scope>INTERACTION WITH NRIP1</scope>
</reference>
<reference key="24">
    <citation type="journal article" date="2011" name="Nature">
        <title>Suppression of TH17 differentiation and autoimmunity by a synthetic ROR ligand.</title>
        <authorList>
            <person name="Solt L.A."/>
            <person name="Kumar N."/>
            <person name="Nuhant P."/>
            <person name="Wang Y."/>
            <person name="Lauer J.L."/>
            <person name="Liu J."/>
            <person name="Istrate M.A."/>
            <person name="Kamenecka T.M."/>
            <person name="Roush W.R."/>
            <person name="Vidovic D."/>
            <person name="Schuerer S.C."/>
            <person name="Xu J."/>
            <person name="Wagoner G."/>
            <person name="Drew P.D."/>
            <person name="Griffin P.R."/>
            <person name="Burris T.P."/>
        </authorList>
    </citation>
    <scope>FUNCTION IN T(H)17 CELLS DIFFERENTIATION</scope>
    <scope>INDUCTION BY IL6 AND TGFB1</scope>
    <scope>INTERACTION WITH NCOR1 AND NCOA2</scope>
    <scope>IDENTIFICATION OF LIGANDS</scope>
</reference>
<reference key="25">
    <citation type="journal article" date="2011" name="Nature">
        <title>Cryptochromes mediate rhythmic repression of the glucocorticoid receptor.</title>
        <authorList>
            <person name="Lamia K.A."/>
            <person name="Papp S.J."/>
            <person name="Yu R.T."/>
            <person name="Barish G.D."/>
            <person name="Uhlenhaut N.H."/>
            <person name="Jonker J.W."/>
            <person name="Downes M."/>
            <person name="Evans R.M."/>
        </authorList>
    </citation>
    <scope>INTERACTION WITH CRY1</scope>
</reference>
<reference key="26">
    <citation type="journal article" date="2012" name="Nucleic Acids Res.">
        <title>RORgamma directly regulates the circadian expression of clock genes and downstream targets in vivo.</title>
        <authorList>
            <person name="Takeda Y."/>
            <person name="Jothi R."/>
            <person name="Birault V."/>
            <person name="Jetten A.M."/>
        </authorList>
    </citation>
    <scope>FUNCTION IN CIRCADIAN RHYTHMS</scope>
    <scope>TISSUE SPECIFICITY</scope>
    <scope>SUBCELLULAR LOCATION</scope>
    <scope>DNA-BINDING</scope>
    <scope>INDUCTION</scope>
</reference>
<reference key="27">
    <citation type="journal article" date="2012" name="Trends Endocrinol. Metab.">
        <title>Action of RORs and their ligands in (patho)physiology.</title>
        <authorList>
            <person name="Solt L.A."/>
            <person name="Burris T.P."/>
        </authorList>
    </citation>
    <scope>REVIEW ON FUNCTION AND LIGANDS</scope>
</reference>
<reference key="28">
    <citation type="journal article" date="2013" name="Circulation">
        <title>Pivotal role of Rho-associated kinase 2 in generating the intrinsic circadian rhythm of vascular contractility.</title>
        <authorList>
            <person name="Saito T."/>
            <person name="Hirano M."/>
            <person name="Ide T."/>
            <person name="Ichiki T."/>
            <person name="Koibuchi N."/>
            <person name="Sunagawa K."/>
            <person name="Hirano K."/>
        </authorList>
    </citation>
    <scope>FUNCTION</scope>
    <scope>INDUCTION</scope>
</reference>
<reference key="29">
    <citation type="journal article" date="2013" name="Nucleic Acids Res.">
        <title>Prospero-related homeobox 1 (Prox1) functions as a novel modulator of retinoic acid-related orphan receptors alpha- and gamma-mediated transactivation.</title>
        <authorList>
            <person name="Takeda Y."/>
            <person name="Jetten A.M."/>
        </authorList>
    </citation>
    <scope>FUNCTION</scope>
    <scope>SUBCELLULAR LOCATION</scope>
    <scope>INTERACTION WITH PROX1</scope>
</reference>